<feature type="chain" id="PRO_0000189444" description="2-C-methyl-D-erythritol 2,4-cyclodiphosphate synthase">
    <location>
        <begin position="1"/>
        <end position="162"/>
    </location>
</feature>
<feature type="binding site" evidence="1">
    <location>
        <begin position="12"/>
        <end position="14"/>
    </location>
    <ligand>
        <name>4-CDP-2-C-methyl-D-erythritol 2-phosphate</name>
        <dbReference type="ChEBI" id="CHEBI:57919"/>
    </ligand>
</feature>
<feature type="binding site" evidence="1">
    <location>
        <position position="12"/>
    </location>
    <ligand>
        <name>a divalent metal cation</name>
        <dbReference type="ChEBI" id="CHEBI:60240"/>
    </ligand>
</feature>
<feature type="binding site" evidence="1">
    <location>
        <position position="14"/>
    </location>
    <ligand>
        <name>a divalent metal cation</name>
        <dbReference type="ChEBI" id="CHEBI:60240"/>
    </ligand>
</feature>
<feature type="binding site" evidence="1">
    <location>
        <begin position="38"/>
        <end position="39"/>
    </location>
    <ligand>
        <name>4-CDP-2-C-methyl-D-erythritol 2-phosphate</name>
        <dbReference type="ChEBI" id="CHEBI:57919"/>
    </ligand>
</feature>
<feature type="binding site" evidence="1">
    <location>
        <position position="46"/>
    </location>
    <ligand>
        <name>a divalent metal cation</name>
        <dbReference type="ChEBI" id="CHEBI:60240"/>
    </ligand>
</feature>
<feature type="binding site" evidence="1">
    <location>
        <begin position="60"/>
        <end position="62"/>
    </location>
    <ligand>
        <name>4-CDP-2-C-methyl-D-erythritol 2-phosphate</name>
        <dbReference type="ChEBI" id="CHEBI:57919"/>
    </ligand>
</feature>
<feature type="binding site" evidence="1">
    <location>
        <begin position="65"/>
        <end position="69"/>
    </location>
    <ligand>
        <name>4-CDP-2-C-methyl-D-erythritol 2-phosphate</name>
        <dbReference type="ChEBI" id="CHEBI:57919"/>
    </ligand>
</feature>
<feature type="binding site" evidence="1">
    <location>
        <position position="146"/>
    </location>
    <ligand>
        <name>4-CDP-2-C-methyl-D-erythritol 2-phosphate</name>
        <dbReference type="ChEBI" id="CHEBI:57919"/>
    </ligand>
</feature>
<feature type="site" description="Transition state stabilizer" evidence="1">
    <location>
        <position position="38"/>
    </location>
</feature>
<feature type="site" description="Transition state stabilizer" evidence="1">
    <location>
        <position position="137"/>
    </location>
</feature>
<evidence type="ECO:0000255" key="1">
    <source>
        <dbReference type="HAMAP-Rule" id="MF_00107"/>
    </source>
</evidence>
<dbReference type="EC" id="4.6.1.12" evidence="1"/>
<dbReference type="EMBL" id="BX640448">
    <property type="protein sequence ID" value="CAE35790.1"/>
    <property type="molecule type" value="Genomic_DNA"/>
</dbReference>
<dbReference type="RefSeq" id="WP_010926958.1">
    <property type="nucleotide sequence ID" value="NC_002927.3"/>
</dbReference>
<dbReference type="SMR" id="Q7WCW4"/>
<dbReference type="GeneID" id="56477701"/>
<dbReference type="KEGG" id="bbr:BB3816"/>
<dbReference type="eggNOG" id="COG0245">
    <property type="taxonomic scope" value="Bacteria"/>
</dbReference>
<dbReference type="HOGENOM" id="CLU_084630_2_0_4"/>
<dbReference type="UniPathway" id="UPA00056">
    <property type="reaction ID" value="UER00095"/>
</dbReference>
<dbReference type="Proteomes" id="UP000001027">
    <property type="component" value="Chromosome"/>
</dbReference>
<dbReference type="GO" id="GO:0008685">
    <property type="term" value="F:2-C-methyl-D-erythritol 2,4-cyclodiphosphate synthase activity"/>
    <property type="evidence" value="ECO:0007669"/>
    <property type="project" value="UniProtKB-UniRule"/>
</dbReference>
<dbReference type="GO" id="GO:0046872">
    <property type="term" value="F:metal ion binding"/>
    <property type="evidence" value="ECO:0007669"/>
    <property type="project" value="UniProtKB-KW"/>
</dbReference>
<dbReference type="GO" id="GO:0019288">
    <property type="term" value="P:isopentenyl diphosphate biosynthetic process, methylerythritol 4-phosphate pathway"/>
    <property type="evidence" value="ECO:0007669"/>
    <property type="project" value="UniProtKB-UniRule"/>
</dbReference>
<dbReference type="GO" id="GO:0016114">
    <property type="term" value="P:terpenoid biosynthetic process"/>
    <property type="evidence" value="ECO:0007669"/>
    <property type="project" value="InterPro"/>
</dbReference>
<dbReference type="CDD" id="cd00554">
    <property type="entry name" value="MECDP_synthase"/>
    <property type="match status" value="1"/>
</dbReference>
<dbReference type="FunFam" id="3.30.1330.50:FF:000001">
    <property type="entry name" value="2-C-methyl-D-erythritol 2,4-cyclodiphosphate synthase"/>
    <property type="match status" value="1"/>
</dbReference>
<dbReference type="Gene3D" id="3.30.1330.50">
    <property type="entry name" value="2-C-methyl-D-erythritol 2,4-cyclodiphosphate synthase"/>
    <property type="match status" value="1"/>
</dbReference>
<dbReference type="HAMAP" id="MF_00107">
    <property type="entry name" value="IspF"/>
    <property type="match status" value="1"/>
</dbReference>
<dbReference type="InterPro" id="IPR003526">
    <property type="entry name" value="MECDP_synthase"/>
</dbReference>
<dbReference type="InterPro" id="IPR020555">
    <property type="entry name" value="MECDP_synthase_CS"/>
</dbReference>
<dbReference type="InterPro" id="IPR036571">
    <property type="entry name" value="MECDP_synthase_sf"/>
</dbReference>
<dbReference type="NCBIfam" id="TIGR00151">
    <property type="entry name" value="ispF"/>
    <property type="match status" value="1"/>
</dbReference>
<dbReference type="PANTHER" id="PTHR43181">
    <property type="entry name" value="2-C-METHYL-D-ERYTHRITOL 2,4-CYCLODIPHOSPHATE SYNTHASE, CHLOROPLASTIC"/>
    <property type="match status" value="1"/>
</dbReference>
<dbReference type="PANTHER" id="PTHR43181:SF1">
    <property type="entry name" value="2-C-METHYL-D-ERYTHRITOL 2,4-CYCLODIPHOSPHATE SYNTHASE, CHLOROPLASTIC"/>
    <property type="match status" value="1"/>
</dbReference>
<dbReference type="Pfam" id="PF02542">
    <property type="entry name" value="YgbB"/>
    <property type="match status" value="1"/>
</dbReference>
<dbReference type="SUPFAM" id="SSF69765">
    <property type="entry name" value="IpsF-like"/>
    <property type="match status" value="1"/>
</dbReference>
<dbReference type="PROSITE" id="PS01350">
    <property type="entry name" value="ISPF"/>
    <property type="match status" value="1"/>
</dbReference>
<reference key="1">
    <citation type="journal article" date="2003" name="Nat. Genet.">
        <title>Comparative analysis of the genome sequences of Bordetella pertussis, Bordetella parapertussis and Bordetella bronchiseptica.</title>
        <authorList>
            <person name="Parkhill J."/>
            <person name="Sebaihia M."/>
            <person name="Preston A."/>
            <person name="Murphy L.D."/>
            <person name="Thomson N.R."/>
            <person name="Harris D.E."/>
            <person name="Holden M.T.G."/>
            <person name="Churcher C.M."/>
            <person name="Bentley S.D."/>
            <person name="Mungall K.L."/>
            <person name="Cerdeno-Tarraga A.-M."/>
            <person name="Temple L."/>
            <person name="James K.D."/>
            <person name="Harris B."/>
            <person name="Quail M.A."/>
            <person name="Achtman M."/>
            <person name="Atkin R."/>
            <person name="Baker S."/>
            <person name="Basham D."/>
            <person name="Bason N."/>
            <person name="Cherevach I."/>
            <person name="Chillingworth T."/>
            <person name="Collins M."/>
            <person name="Cronin A."/>
            <person name="Davis P."/>
            <person name="Doggett J."/>
            <person name="Feltwell T."/>
            <person name="Goble A."/>
            <person name="Hamlin N."/>
            <person name="Hauser H."/>
            <person name="Holroyd S."/>
            <person name="Jagels K."/>
            <person name="Leather S."/>
            <person name="Moule S."/>
            <person name="Norberczak H."/>
            <person name="O'Neil S."/>
            <person name="Ormond D."/>
            <person name="Price C."/>
            <person name="Rabbinowitsch E."/>
            <person name="Rutter S."/>
            <person name="Sanders M."/>
            <person name="Saunders D."/>
            <person name="Seeger K."/>
            <person name="Sharp S."/>
            <person name="Simmonds M."/>
            <person name="Skelton J."/>
            <person name="Squares R."/>
            <person name="Squares S."/>
            <person name="Stevens K."/>
            <person name="Unwin L."/>
            <person name="Whitehead S."/>
            <person name="Barrell B.G."/>
            <person name="Maskell D.J."/>
        </authorList>
    </citation>
    <scope>NUCLEOTIDE SEQUENCE [LARGE SCALE GENOMIC DNA]</scope>
    <source>
        <strain>ATCC BAA-588 / NCTC 13252 / RB50</strain>
    </source>
</reference>
<proteinExistence type="inferred from homology"/>
<sequence length="162" mass="16599">MNIPFRVGQGFDVHALVEGRPLIIGGVTIAHTHGLLGHSDADVLLHAVTDALLGGAGLGDIGRHFPDTDQAYRGADSRVLLRAAFDKVRAAGWAPVNVDATIHAQAPKIGPHAAAMVANIAADLALDAGAVNIKAKTNEGLGYLGRKEGIAANVVVLLARAG</sequence>
<protein>
    <recommendedName>
        <fullName evidence="1">2-C-methyl-D-erythritol 2,4-cyclodiphosphate synthase</fullName>
        <shortName evidence="1">MECDP-synthase</shortName>
        <shortName evidence="1">MECPP-synthase</shortName>
        <shortName evidence="1">MECPS</shortName>
        <ecNumber evidence="1">4.6.1.12</ecNumber>
    </recommendedName>
</protein>
<accession>Q7WCW4</accession>
<comment type="function">
    <text evidence="1">Involved in the biosynthesis of isopentenyl diphosphate (IPP) and dimethylallyl diphosphate (DMAPP), two major building blocks of isoprenoid compounds. Catalyzes the conversion of 4-diphosphocytidyl-2-C-methyl-D-erythritol 2-phosphate (CDP-ME2P) to 2-C-methyl-D-erythritol 2,4-cyclodiphosphate (ME-CPP) with a corresponding release of cytidine 5-monophosphate (CMP).</text>
</comment>
<comment type="catalytic activity">
    <reaction evidence="1">
        <text>4-CDP-2-C-methyl-D-erythritol 2-phosphate = 2-C-methyl-D-erythritol 2,4-cyclic diphosphate + CMP</text>
        <dbReference type="Rhea" id="RHEA:23864"/>
        <dbReference type="ChEBI" id="CHEBI:57919"/>
        <dbReference type="ChEBI" id="CHEBI:58483"/>
        <dbReference type="ChEBI" id="CHEBI:60377"/>
        <dbReference type="EC" id="4.6.1.12"/>
    </reaction>
</comment>
<comment type="cofactor">
    <cofactor evidence="1">
        <name>a divalent metal cation</name>
        <dbReference type="ChEBI" id="CHEBI:60240"/>
    </cofactor>
    <text evidence="1">Binds 1 divalent metal cation per subunit.</text>
</comment>
<comment type="pathway">
    <text evidence="1">Isoprenoid biosynthesis; isopentenyl diphosphate biosynthesis via DXP pathway; isopentenyl diphosphate from 1-deoxy-D-xylulose 5-phosphate: step 4/6.</text>
</comment>
<comment type="subunit">
    <text evidence="1">Homotrimer.</text>
</comment>
<comment type="similarity">
    <text evidence="1">Belongs to the IspF family.</text>
</comment>
<organism>
    <name type="scientific">Bordetella bronchiseptica (strain ATCC BAA-588 / NCTC 13252 / RB50)</name>
    <name type="common">Alcaligenes bronchisepticus</name>
    <dbReference type="NCBI Taxonomy" id="257310"/>
    <lineage>
        <taxon>Bacteria</taxon>
        <taxon>Pseudomonadati</taxon>
        <taxon>Pseudomonadota</taxon>
        <taxon>Betaproteobacteria</taxon>
        <taxon>Burkholderiales</taxon>
        <taxon>Alcaligenaceae</taxon>
        <taxon>Bordetella</taxon>
    </lineage>
</organism>
<keyword id="KW-0414">Isoprene biosynthesis</keyword>
<keyword id="KW-0456">Lyase</keyword>
<keyword id="KW-0479">Metal-binding</keyword>
<gene>
    <name evidence="1" type="primary">ispF</name>
    <name type="synonym">mecS</name>
    <name type="ordered locus">BB3816</name>
</gene>
<name>ISPF_BORBR</name>